<dbReference type="EMBL" id="AB169333">
    <property type="protein sequence ID" value="BAE01418.1"/>
    <property type="molecule type" value="mRNA"/>
</dbReference>
<dbReference type="RefSeq" id="NP_001272301.1">
    <property type="nucleotide sequence ID" value="NM_001285372.1"/>
</dbReference>
<dbReference type="STRING" id="9541.ENSMFAP00000041304"/>
<dbReference type="eggNOG" id="ENOG502QVGU">
    <property type="taxonomic scope" value="Eukaryota"/>
</dbReference>
<dbReference type="Proteomes" id="UP000233100">
    <property type="component" value="Unplaced"/>
</dbReference>
<dbReference type="GO" id="GO:0070860">
    <property type="term" value="C:RNA polymerase I core factor complex"/>
    <property type="evidence" value="ECO:0007669"/>
    <property type="project" value="InterPro"/>
</dbReference>
<dbReference type="GO" id="GO:0005668">
    <property type="term" value="C:RNA polymerase transcription factor SL1 complex"/>
    <property type="evidence" value="ECO:0007669"/>
    <property type="project" value="TreeGrafter"/>
</dbReference>
<dbReference type="GO" id="GO:0001164">
    <property type="term" value="F:RNA polymerase I core promoter sequence-specific DNA binding"/>
    <property type="evidence" value="ECO:0000250"/>
    <property type="project" value="UniProtKB"/>
</dbReference>
<dbReference type="GO" id="GO:0008270">
    <property type="term" value="F:zinc ion binding"/>
    <property type="evidence" value="ECO:0007669"/>
    <property type="project" value="UniProtKB-KW"/>
</dbReference>
<dbReference type="GO" id="GO:0042790">
    <property type="term" value="P:nucleolar large rRNA transcription by RNA polymerase I"/>
    <property type="evidence" value="ECO:0007669"/>
    <property type="project" value="TreeGrafter"/>
</dbReference>
<dbReference type="GO" id="GO:0001188">
    <property type="term" value="P:RNA polymerase I preinitiation complex assembly"/>
    <property type="evidence" value="ECO:0000250"/>
    <property type="project" value="UniProtKB"/>
</dbReference>
<dbReference type="InterPro" id="IPR048538">
    <property type="entry name" value="Rrn7_cyclin_C"/>
</dbReference>
<dbReference type="InterPro" id="IPR048540">
    <property type="entry name" value="Rrn7_cyclin_N"/>
</dbReference>
<dbReference type="InterPro" id="IPR033599">
    <property type="entry name" value="TAF1B/Rrn7"/>
</dbReference>
<dbReference type="InterPro" id="IPR021752">
    <property type="entry name" value="TF_Rrn7_Zf"/>
</dbReference>
<dbReference type="PANTHER" id="PTHR31576">
    <property type="entry name" value="TATA BOX-BINDING PROTEIN-ASSOCIATED FACTOR RNA POLYMERASE I SUBUNIT B"/>
    <property type="match status" value="1"/>
</dbReference>
<dbReference type="PANTHER" id="PTHR31576:SF2">
    <property type="entry name" value="TATA BOX-BINDING PROTEIN-ASSOCIATED FACTOR RNA POLYMERASE I SUBUNIT B"/>
    <property type="match status" value="1"/>
</dbReference>
<dbReference type="Pfam" id="PF20645">
    <property type="entry name" value="Rrn7_cyclin_C"/>
    <property type="match status" value="1"/>
</dbReference>
<dbReference type="Pfam" id="PF20644">
    <property type="entry name" value="Rrn7_cyclin_N"/>
    <property type="match status" value="1"/>
</dbReference>
<dbReference type="Pfam" id="PF11781">
    <property type="entry name" value="Zn_ribbon_RRN7"/>
    <property type="match status" value="1"/>
</dbReference>
<accession>Q4R657</accession>
<reference key="1">
    <citation type="submission" date="2005-06" db="EMBL/GenBank/DDBJ databases">
        <title>DNA sequences of macaque genes expressed in brain or testis and its evolutionary implications.</title>
        <authorList>
            <consortium name="International consortium for macaque cDNA sequencing and analysis"/>
        </authorList>
    </citation>
    <scope>NUCLEOTIDE SEQUENCE [LARGE SCALE MRNA]</scope>
    <source>
        <tissue>Testis</tissue>
    </source>
</reference>
<gene>
    <name type="primary">TAF1B</name>
    <name type="ORF">QtsA-19105</name>
</gene>
<keyword id="KW-0007">Acetylation</keyword>
<keyword id="KW-0238">DNA-binding</keyword>
<keyword id="KW-0479">Metal-binding</keyword>
<keyword id="KW-0539">Nucleus</keyword>
<keyword id="KW-1185">Reference proteome</keyword>
<keyword id="KW-0804">Transcription</keyword>
<keyword id="KW-0805">Transcription regulation</keyword>
<keyword id="KW-0862">Zinc</keyword>
<keyword id="KW-0863">Zinc-finger</keyword>
<proteinExistence type="evidence at transcript level"/>
<evidence type="ECO:0000250" key="1"/>
<evidence type="ECO:0000250" key="2">
    <source>
        <dbReference type="UniProtKB" id="Q53T94"/>
    </source>
</evidence>
<evidence type="ECO:0000305" key="3"/>
<name>TAF1B_MACFA</name>
<comment type="function">
    <text evidence="2">Component of RNA polymerase I core factor complex that acts as a GTF2B/TFIIB-like factor and plays a key role in multiple steps during transcription initiation such as pre-initiation complex (PIC) assembly and postpolymerase recruitment events in polymerase I (Pol I) transcription. Binds rDNA promoters and plays a role in Pol I recruitment as a component of the SL1/TIF-IB complex and, possibly, directly through its interaction with RRN3 (By similarity).</text>
</comment>
<comment type="subunit">
    <text evidence="2">Interacts with FLNA (via N-terminus) (By similarity). Component of the transcription factor SL1/TIF-IB complex, notably composed of TBP and at least TAF1A, TAF1B, TAF1C and TAF1D. In the complex interacts directly with TBP, TAF1A and TAF1C. Interaction of the SL1/TIF-IB subunits with TBP excludes interaction of TBP with the transcription factor IID (TFIID) subunits. Interacts with TBP and RRN3 (By similarity). Part of Pol I pre-initiation complex (PIC), in which Pol I core assembles with RRN3 and promoter-bound UTBF and SL1/TIF-IB complex.</text>
</comment>
<comment type="subcellular location">
    <subcellularLocation>
        <location evidence="2">Nucleus</location>
        <location evidence="2">Nucleolus</location>
    </subcellularLocation>
</comment>
<comment type="domain">
    <text evidence="1">Although it shares weak sequence similarity with GTF2B/TFIIB, displays a similar subdomain organization as GTF2B/TFIIB, with a N-terminal zinc finger, a connecting region (composed of B-reader and B-linker regions), followed by 2 cyclin folds. The RRN7-type zinc finger plays an essential postrecruitment role in Pol I transcription at a step preceding synthesis of the first 40 nucleotides (By similarity).</text>
</comment>
<comment type="similarity">
    <text evidence="3">Belongs to the RRN7/TAF1B family.</text>
</comment>
<sequence length="588" mass="68548">MDLEEAEEFKERCSQCAAVSWGLTDEGKYYCTSCHNVTERSQEVINTDLIPNTQIKALNRGLKKKNNSEKGWDWYVCEGFQNILCQQAEALKNLGIGPELKNDVLHNFWKRYLQKSKQAYCKNPVYTTGRKPTVLEDNRSHSDWASEPELLSDVSCPPFLESGAESQSDIHTRKPFPISKASQSETSVCSGSLGGVEYSQRKEKGIVKMTVPQTLAFCYLSLLWQREAITLSDLLRFVEEDHIPYINAFQHFPEQMKLYGRDRGIFGIESWPDYEDIYKKTIEVGTFLDLPRFPDITEDCYLHPNILCMKYLMEVNLPDEMHNLTCHVVKMTGMGEVDFLTFDPIAKMAKTVKYDVQAVAIIVVVLKLLFLLDDNLEWSLSNLAEKHNEKNKKDKPWFDFRKWYQIMKKAFDEKKQKWEEARAKYLWKSEKPLYYSFVDKPVAYKKREMVVNLQKQFSTLVDSTATAGKKSPSSFQFNWTEEDTDRTCFHGHSLQGVLKEKGQSLLTKNSLYWLSTQKFCRCYCTHVTTYEESNYSLSYQFILNLFSFLLRIKTSLLHEEVSLVEKKLFEKKYSVTKKKSRSKKARRH</sequence>
<protein>
    <recommendedName>
        <fullName>TATA box-binding protein-associated factor RNA polymerase I subunit B</fullName>
    </recommendedName>
    <alternativeName>
        <fullName>TATA box-binding protein-associated factor 1B</fullName>
        <shortName>TBP-associated factor 1B</shortName>
    </alternativeName>
    <alternativeName>
        <fullName>Transcription initiation factor SL1/TIF-IB subunit B</fullName>
    </alternativeName>
</protein>
<feature type="chain" id="PRO_0000261393" description="TATA box-binding protein-associated factor RNA polymerase I subunit B">
    <location>
        <begin position="1"/>
        <end position="588"/>
    </location>
</feature>
<feature type="zinc finger region" description="RRN7-type">
    <location>
        <begin position="4"/>
        <end position="39"/>
    </location>
</feature>
<feature type="region of interest" description="B-reader" evidence="1">
    <location>
        <begin position="40"/>
        <end position="68"/>
    </location>
</feature>
<feature type="region of interest" description="B-linker" evidence="1">
    <location>
        <begin position="69"/>
        <end position="73"/>
    </location>
</feature>
<feature type="region of interest" description="N-terminal cyclin fold" evidence="1">
    <location>
        <begin position="74"/>
        <end position="261"/>
    </location>
</feature>
<feature type="region of interest" description="C-terminal cyclin fold" evidence="1">
    <location>
        <begin position="262"/>
        <end position="372"/>
    </location>
</feature>
<feature type="binding site" evidence="1">
    <location>
        <position position="13"/>
    </location>
    <ligand>
        <name>Zn(2+)</name>
        <dbReference type="ChEBI" id="CHEBI:29105"/>
    </ligand>
</feature>
<feature type="binding site" evidence="1">
    <location>
        <position position="16"/>
    </location>
    <ligand>
        <name>Zn(2+)</name>
        <dbReference type="ChEBI" id="CHEBI:29105"/>
    </ligand>
</feature>
<feature type="binding site" evidence="1">
    <location>
        <position position="31"/>
    </location>
    <ligand>
        <name>Zn(2+)</name>
        <dbReference type="ChEBI" id="CHEBI:29105"/>
    </ligand>
</feature>
<feature type="binding site" evidence="1">
    <location>
        <position position="34"/>
    </location>
    <ligand>
        <name>Zn(2+)</name>
        <dbReference type="ChEBI" id="CHEBI:29105"/>
    </ligand>
</feature>
<feature type="modified residue" description="N-acetylmethionine" evidence="2">
    <location>
        <position position="1"/>
    </location>
</feature>
<feature type="modified residue" description="N6-acetyllysine" evidence="2">
    <location>
        <position position="440"/>
    </location>
</feature>
<organism>
    <name type="scientific">Macaca fascicularis</name>
    <name type="common">Crab-eating macaque</name>
    <name type="synonym">Cynomolgus monkey</name>
    <dbReference type="NCBI Taxonomy" id="9541"/>
    <lineage>
        <taxon>Eukaryota</taxon>
        <taxon>Metazoa</taxon>
        <taxon>Chordata</taxon>
        <taxon>Craniata</taxon>
        <taxon>Vertebrata</taxon>
        <taxon>Euteleostomi</taxon>
        <taxon>Mammalia</taxon>
        <taxon>Eutheria</taxon>
        <taxon>Euarchontoglires</taxon>
        <taxon>Primates</taxon>
        <taxon>Haplorrhini</taxon>
        <taxon>Catarrhini</taxon>
        <taxon>Cercopithecidae</taxon>
        <taxon>Cercopithecinae</taxon>
        <taxon>Macaca</taxon>
    </lineage>
</organism>